<sequence>WIMGHMVNAIEQVDEFLDLGANAIEFDIDFDKDGIAQITHHGIPCDCGRKCTKKAIFTEYLDNIRQVTTPDDPKFREQLVLLALDLKLQRISSAKAYRAGEDVAKKLLDHYWQRGNSRARAYILLNIPLVEDYEFIRAFKDTLKNEGYESYNDKVGINSAGNEDLDKIRDVLEILGIHKQVWQADGITSCFARGTERLKEALEKRDTPGYNYINKVYAWTLVRKSIMRRSLRLGVDGVMSNNPDRVIKVLKEKEFADKFRLATYNDNPWEKFRG</sequence>
<accession>C0JB86</accession>
<proteinExistence type="evidence at transcript level"/>
<name>B2KBC_SICCD</name>
<comment type="function">
    <text evidence="1 3">Dermonecrotic toxins cleave the phosphodiester linkage between the phosphate and headgroup of certain phospholipids (sphingolipid and lysolipid substrates), forming an alcohol (often choline) and a cyclic phosphate (By similarity). This toxin acts on sphingomyelin (SM) (By similarity). It may also act on ceramide phosphoethanolamine (CPE), lysophosphatidylcholine (LPC) and lysophosphatidylethanolamine (LPE), but not on lysophosphatidylserine (LPS), and lysophosphatidylglycerol (LPG) (By similarity). It acts by transphosphatidylation, releasing exclusively cyclic phosphate products as second products (By similarity). Induces dermonecrosis, hemolysis, increased vascular permeability, edema, inflammatory response, and platelet aggregation (By similarity).</text>
</comment>
<comment type="catalytic activity">
    <reaction evidence="1">
        <text>an N-(acyl)-sphingosylphosphocholine = an N-(acyl)-sphingosyl-1,3-cyclic phosphate + choline</text>
        <dbReference type="Rhea" id="RHEA:60652"/>
        <dbReference type="ChEBI" id="CHEBI:15354"/>
        <dbReference type="ChEBI" id="CHEBI:64583"/>
        <dbReference type="ChEBI" id="CHEBI:143892"/>
    </reaction>
</comment>
<comment type="catalytic activity">
    <reaction evidence="1">
        <text>an N-(acyl)-sphingosylphosphoethanolamine = an N-(acyl)-sphingosyl-1,3-cyclic phosphate + ethanolamine</text>
        <dbReference type="Rhea" id="RHEA:60648"/>
        <dbReference type="ChEBI" id="CHEBI:57603"/>
        <dbReference type="ChEBI" id="CHEBI:143891"/>
        <dbReference type="ChEBI" id="CHEBI:143892"/>
    </reaction>
</comment>
<comment type="catalytic activity">
    <reaction evidence="1">
        <text>a 1-acyl-sn-glycero-3-phosphocholine = a 1-acyl-sn-glycero-2,3-cyclic phosphate + choline</text>
        <dbReference type="Rhea" id="RHEA:60700"/>
        <dbReference type="ChEBI" id="CHEBI:15354"/>
        <dbReference type="ChEBI" id="CHEBI:58168"/>
        <dbReference type="ChEBI" id="CHEBI:143947"/>
    </reaction>
</comment>
<comment type="catalytic activity">
    <reaction evidence="1">
        <text>a 1-acyl-sn-glycero-3-phosphoethanolamine = a 1-acyl-sn-glycero-2,3-cyclic phosphate + ethanolamine</text>
        <dbReference type="Rhea" id="RHEA:60704"/>
        <dbReference type="ChEBI" id="CHEBI:57603"/>
        <dbReference type="ChEBI" id="CHEBI:64381"/>
        <dbReference type="ChEBI" id="CHEBI:143947"/>
    </reaction>
</comment>
<comment type="cofactor">
    <cofactor evidence="5">
        <name>Mg(2+)</name>
        <dbReference type="ChEBI" id="CHEBI:18420"/>
    </cofactor>
    <text evidence="5">Binds 1 Mg(2+) ion per subunit.</text>
</comment>
<comment type="subcellular location">
    <subcellularLocation>
        <location evidence="8">Secreted</location>
    </subcellularLocation>
</comment>
<comment type="tissue specificity">
    <text evidence="8">Expressed by the venom gland.</text>
</comment>
<comment type="similarity">
    <text evidence="7">Belongs to the arthropod phospholipase D family. Class II subfamily.</text>
</comment>
<comment type="caution">
    <text evidence="1 2 4">The most common activity assay for dermonecrotic toxins detects enzymatic activity by monitoring choline release from substrate. Liberation of choline from sphingomyelin (SM) or lysophosphatidylcholine (LPC) is commonly assumed to result from substrate hydrolysis, giving either ceramide-1-phosphate (C1P) or lysophosphatidic acid (LPA), respectively, as a second product. However, two studies from Lajoie and colleagues (2013 and 2015) report the observation of exclusive formation of cyclic phosphate products as second products, resulting from intramolecular transphosphatidylation. Cyclic phosphates have vastly different biological properties from their monoester counterparts, and they may be relevant to the pathology of brown spider envenomation.</text>
</comment>
<feature type="chain" id="PRO_0000392897" description="Dermonecrotic toxin SdSicTox-betaIIB1bxii">
    <location>
        <begin position="1" status="less than"/>
        <end position="274"/>
    </location>
</feature>
<feature type="active site" evidence="5">
    <location>
        <position position="5"/>
    </location>
</feature>
<feature type="active site" description="Nucleophile" evidence="5">
    <location>
        <position position="41"/>
    </location>
</feature>
<feature type="binding site" evidence="5">
    <location>
        <position position="25"/>
    </location>
    <ligand>
        <name>Mg(2+)</name>
        <dbReference type="ChEBI" id="CHEBI:18420"/>
    </ligand>
</feature>
<feature type="binding site" evidence="5">
    <location>
        <position position="27"/>
    </location>
    <ligand>
        <name>Mg(2+)</name>
        <dbReference type="ChEBI" id="CHEBI:18420"/>
    </ligand>
</feature>
<feature type="binding site" evidence="5">
    <location>
        <position position="85"/>
    </location>
    <ligand>
        <name>Mg(2+)</name>
        <dbReference type="ChEBI" id="CHEBI:18420"/>
    </ligand>
</feature>
<feature type="disulfide bond" evidence="3">
    <location>
        <begin position="45"/>
        <end position="51"/>
    </location>
</feature>
<feature type="disulfide bond" evidence="3">
    <location>
        <begin position="47"/>
        <end position="190"/>
    </location>
</feature>
<feature type="non-terminal residue">
    <location>
        <position position="1"/>
    </location>
</feature>
<protein>
    <recommendedName>
        <fullName evidence="6">Dermonecrotic toxin SdSicTox-betaIIB1bxii</fullName>
        <ecNumber evidence="4">4.6.1.-</ecNumber>
    </recommendedName>
    <alternativeName>
        <fullName>Phospholipase D</fullName>
        <shortName>PLD</shortName>
    </alternativeName>
    <alternativeName>
        <fullName>Sphingomyelin phosphodiesterase D</fullName>
        <shortName>SMD</shortName>
        <shortName>SMase D</shortName>
        <shortName>Sphingomyelinase D</shortName>
    </alternativeName>
</protein>
<keyword id="KW-0204">Cytolysis</keyword>
<keyword id="KW-1061">Dermonecrotic toxin</keyword>
<keyword id="KW-1015">Disulfide bond</keyword>
<keyword id="KW-0354">Hemolysis</keyword>
<keyword id="KW-0442">Lipid degradation</keyword>
<keyword id="KW-0443">Lipid metabolism</keyword>
<keyword id="KW-0456">Lyase</keyword>
<keyword id="KW-0460">Magnesium</keyword>
<keyword id="KW-0479">Metal-binding</keyword>
<keyword id="KW-0964">Secreted</keyword>
<keyword id="KW-0800">Toxin</keyword>
<evidence type="ECO:0000250" key="1">
    <source>
        <dbReference type="UniProtKB" id="A0A0D4WTV1"/>
    </source>
</evidence>
<evidence type="ECO:0000250" key="2">
    <source>
        <dbReference type="UniProtKB" id="A0A0D4WV12"/>
    </source>
</evidence>
<evidence type="ECO:0000250" key="3">
    <source>
        <dbReference type="UniProtKB" id="P0CE80"/>
    </source>
</evidence>
<evidence type="ECO:0000250" key="4">
    <source>
        <dbReference type="UniProtKB" id="Q4ZFU2"/>
    </source>
</evidence>
<evidence type="ECO:0000250" key="5">
    <source>
        <dbReference type="UniProtKB" id="Q8I914"/>
    </source>
</evidence>
<evidence type="ECO:0000303" key="6">
    <source>
    </source>
</evidence>
<evidence type="ECO:0000305" key="7"/>
<evidence type="ECO:0000305" key="8">
    <source>
    </source>
</evidence>
<reference key="1">
    <citation type="journal article" date="2009" name="Mol. Biol. Evol.">
        <title>Molecular evolution, functional variation, and proposed nomenclature of the gene family that includes sphingomyelinase D in sicariid spider venoms.</title>
        <authorList>
            <person name="Binford G.J."/>
            <person name="Bodner M.R."/>
            <person name="Cordes M.H."/>
            <person name="Baldwin K.L."/>
            <person name="Rynerson M.R."/>
            <person name="Burns S.N."/>
            <person name="Zobel-Thropp P.A."/>
        </authorList>
    </citation>
    <scope>NUCLEOTIDE SEQUENCE [MRNA]</scope>
    <scope>NOMENCLATURE</scope>
    <source>
        <tissue>Venom gland</tissue>
    </source>
</reference>
<organism>
    <name type="scientific">Sicarius cf. damarensis (strain GJB-2008)</name>
    <name type="common">Six-eyed sand spider</name>
    <dbReference type="NCBI Taxonomy" id="575956"/>
    <lineage>
        <taxon>Eukaryota</taxon>
        <taxon>Metazoa</taxon>
        <taxon>Ecdysozoa</taxon>
        <taxon>Arthropoda</taxon>
        <taxon>Chelicerata</taxon>
        <taxon>Arachnida</taxon>
        <taxon>Araneae</taxon>
        <taxon>Araneomorphae</taxon>
        <taxon>Haplogynae</taxon>
        <taxon>Scytodoidea</taxon>
        <taxon>Sicariidae</taxon>
        <taxon>Sicarius</taxon>
    </lineage>
</organism>
<dbReference type="EC" id="4.6.1.-" evidence="4"/>
<dbReference type="EMBL" id="FJ171521">
    <property type="protein sequence ID" value="ACN49017.1"/>
    <property type="molecule type" value="mRNA"/>
</dbReference>
<dbReference type="SMR" id="C0JB86"/>
<dbReference type="GO" id="GO:0005576">
    <property type="term" value="C:extracellular region"/>
    <property type="evidence" value="ECO:0007669"/>
    <property type="project" value="UniProtKB-SubCell"/>
</dbReference>
<dbReference type="GO" id="GO:0016829">
    <property type="term" value="F:lyase activity"/>
    <property type="evidence" value="ECO:0007669"/>
    <property type="project" value="UniProtKB-KW"/>
</dbReference>
<dbReference type="GO" id="GO:0046872">
    <property type="term" value="F:metal ion binding"/>
    <property type="evidence" value="ECO:0007669"/>
    <property type="project" value="UniProtKB-KW"/>
</dbReference>
<dbReference type="GO" id="GO:0008081">
    <property type="term" value="F:phosphoric diester hydrolase activity"/>
    <property type="evidence" value="ECO:0007669"/>
    <property type="project" value="InterPro"/>
</dbReference>
<dbReference type="GO" id="GO:0090729">
    <property type="term" value="F:toxin activity"/>
    <property type="evidence" value="ECO:0007669"/>
    <property type="project" value="UniProtKB-KW"/>
</dbReference>
<dbReference type="GO" id="GO:0031640">
    <property type="term" value="P:killing of cells of another organism"/>
    <property type="evidence" value="ECO:0007669"/>
    <property type="project" value="UniProtKB-KW"/>
</dbReference>
<dbReference type="GO" id="GO:0016042">
    <property type="term" value="P:lipid catabolic process"/>
    <property type="evidence" value="ECO:0007669"/>
    <property type="project" value="UniProtKB-KW"/>
</dbReference>
<dbReference type="CDD" id="cd08576">
    <property type="entry name" value="GDPD_like_SMaseD_PLD"/>
    <property type="match status" value="1"/>
</dbReference>
<dbReference type="Gene3D" id="3.20.20.190">
    <property type="entry name" value="Phosphatidylinositol (PI) phosphodiesterase"/>
    <property type="match status" value="1"/>
</dbReference>
<dbReference type="InterPro" id="IPR017946">
    <property type="entry name" value="PLC-like_Pdiesterase_TIM-brl"/>
</dbReference>
<dbReference type="SUPFAM" id="SSF51695">
    <property type="entry name" value="PLC-like phosphodiesterases"/>
    <property type="match status" value="1"/>
</dbReference>